<sequence length="544" mass="60960">MGIASLERDTKGGTRFTGCTSIREFEFLGKLGEGTFGEVYKARAKRDGSIVALKKILMHNERDGFPITALREIKLLKMLSHTNIMQLREMAVERSKGEGRKKPSMYMVFPYMEHDLSGLLENPEVHFSEAQIKCYMIQLLEGLKYLHGNCILHRDMKAANLLISNQGILQIADFGLARPFDEAPPQPGKGAGEAKRDYTTLVVTRWYRPPELLLQLRRYTSAIDMWGVGCVFGEMFKGKPILAGNSDLNQAQLIFSLVGTPTEENMPGWSSLPGCEGVKHFGNRPGNLAEVFKDQGPMAISLLTELLKLDWRKRVNAIDALKHPYFSTPPLPARPGDLPSFEDSHELDRRRFRGQRAAMPPAPAGGSVGMSRNGGWSTNSGSRTGAETRNPRISSAARSQGNQLRDAWSNEPQQAWQRRGNEELKDPNHSFSSRHRDGGLPPKPPAPIQHSWASGHSDKTGRDRGYGARYGGPEGSVDSYVPNYGGSDRNRDRDQGTAISDRRGSYYDKSHQTSKLDYSREIPSRRRSRSPNYRERVDRGPYRR</sequence>
<dbReference type="EC" id="2.7.11.22"/>
<dbReference type="EC" id="2.7.11.23"/>
<dbReference type="EMBL" id="AJ313310">
    <property type="protein sequence ID" value="CAC42219.1"/>
    <property type="molecule type" value="mRNA"/>
</dbReference>
<dbReference type="EMBL" id="AACD01000163">
    <property type="protein sequence ID" value="EAA60153.1"/>
    <property type="status" value="ALT_SEQ"/>
    <property type="molecule type" value="Genomic_DNA"/>
</dbReference>
<dbReference type="EMBL" id="BN001303">
    <property type="protein sequence ID" value="CBF77846.1"/>
    <property type="molecule type" value="Genomic_DNA"/>
</dbReference>
<dbReference type="RefSeq" id="XP_682134.1">
    <property type="nucleotide sequence ID" value="XM_677042.1"/>
</dbReference>
<dbReference type="SMR" id="Q96VK3"/>
<dbReference type="FunCoup" id="Q96VK3">
    <property type="interactions" value="195"/>
</dbReference>
<dbReference type="STRING" id="227321.Q96VK3"/>
<dbReference type="EnsemblFungi" id="CBF77846">
    <property type="protein sequence ID" value="CBF77846"/>
    <property type="gene ID" value="ANIA_08865"/>
</dbReference>
<dbReference type="VEuPathDB" id="FungiDB:AN8865"/>
<dbReference type="eggNOG" id="KOG0600">
    <property type="taxonomic scope" value="Eukaryota"/>
</dbReference>
<dbReference type="HOGENOM" id="CLU_000288_181_21_1"/>
<dbReference type="InParanoid" id="Q96VK3"/>
<dbReference type="OMA" id="ENMPGWK"/>
<dbReference type="OrthoDB" id="28397at2759"/>
<dbReference type="Proteomes" id="UP000000560">
    <property type="component" value="Chromosome III"/>
</dbReference>
<dbReference type="GO" id="GO:0000785">
    <property type="term" value="C:chromatin"/>
    <property type="evidence" value="ECO:0007669"/>
    <property type="project" value="EnsemblFungi"/>
</dbReference>
<dbReference type="GO" id="GO:0005634">
    <property type="term" value="C:nucleus"/>
    <property type="evidence" value="ECO:0000353"/>
    <property type="project" value="AspGD"/>
</dbReference>
<dbReference type="GO" id="GO:0070691">
    <property type="term" value="C:P-TEFb complex"/>
    <property type="evidence" value="ECO:0007669"/>
    <property type="project" value="EnsemblFungi"/>
</dbReference>
<dbReference type="GO" id="GO:0070693">
    <property type="term" value="C:P-TEFb-cap methyltransferase complex"/>
    <property type="evidence" value="ECO:0007669"/>
    <property type="project" value="EnsemblFungi"/>
</dbReference>
<dbReference type="GO" id="GO:0005524">
    <property type="term" value="F:ATP binding"/>
    <property type="evidence" value="ECO:0007669"/>
    <property type="project" value="UniProtKB-KW"/>
</dbReference>
<dbReference type="GO" id="GO:0004693">
    <property type="term" value="F:cyclin-dependent protein serine/threonine kinase activity"/>
    <property type="evidence" value="ECO:0000318"/>
    <property type="project" value="GO_Central"/>
</dbReference>
<dbReference type="GO" id="GO:0106310">
    <property type="term" value="F:protein serine kinase activity"/>
    <property type="evidence" value="ECO:0007669"/>
    <property type="project" value="RHEA"/>
</dbReference>
<dbReference type="GO" id="GO:0008353">
    <property type="term" value="F:RNA polymerase II CTD heptapeptide repeat kinase activity"/>
    <property type="evidence" value="ECO:0007669"/>
    <property type="project" value="UniProtKB-EC"/>
</dbReference>
<dbReference type="GO" id="GO:0030643">
    <property type="term" value="P:intracellular phosphate ion homeostasis"/>
    <property type="evidence" value="ECO:0007669"/>
    <property type="project" value="EnsemblFungi"/>
</dbReference>
<dbReference type="GO" id="GO:0032968">
    <property type="term" value="P:positive regulation of transcription elongation by RNA polymerase II"/>
    <property type="evidence" value="ECO:0000318"/>
    <property type="project" value="GO_Central"/>
</dbReference>
<dbReference type="GO" id="GO:0006368">
    <property type="term" value="P:transcription elongation by RNA polymerase II"/>
    <property type="evidence" value="ECO:0007669"/>
    <property type="project" value="EnsemblFungi"/>
</dbReference>
<dbReference type="CDD" id="cd07866">
    <property type="entry name" value="STKc_BUR1"/>
    <property type="match status" value="1"/>
</dbReference>
<dbReference type="FunFam" id="3.30.200.20:FF:000514">
    <property type="entry name" value="Serine/threonine-protein kinase BUR1"/>
    <property type="match status" value="1"/>
</dbReference>
<dbReference type="FunFam" id="1.10.510.10:FF:000562">
    <property type="entry name" value="Serine/threonine-protein kinase bur1"/>
    <property type="match status" value="1"/>
</dbReference>
<dbReference type="Gene3D" id="3.30.200.20">
    <property type="entry name" value="Phosphorylase Kinase, domain 1"/>
    <property type="match status" value="1"/>
</dbReference>
<dbReference type="Gene3D" id="1.10.510.10">
    <property type="entry name" value="Transferase(Phosphotransferase) domain 1"/>
    <property type="match status" value="1"/>
</dbReference>
<dbReference type="InterPro" id="IPR050108">
    <property type="entry name" value="CDK"/>
</dbReference>
<dbReference type="InterPro" id="IPR011009">
    <property type="entry name" value="Kinase-like_dom_sf"/>
</dbReference>
<dbReference type="InterPro" id="IPR000719">
    <property type="entry name" value="Prot_kinase_dom"/>
</dbReference>
<dbReference type="InterPro" id="IPR017441">
    <property type="entry name" value="Protein_kinase_ATP_BS"/>
</dbReference>
<dbReference type="InterPro" id="IPR008271">
    <property type="entry name" value="Ser/Thr_kinase_AS"/>
</dbReference>
<dbReference type="PANTHER" id="PTHR24056">
    <property type="entry name" value="CELL DIVISION PROTEIN KINASE"/>
    <property type="match status" value="1"/>
</dbReference>
<dbReference type="PANTHER" id="PTHR24056:SF233">
    <property type="entry name" value="CYCLIN-DEPENDENT KINASE 9"/>
    <property type="match status" value="1"/>
</dbReference>
<dbReference type="Pfam" id="PF00069">
    <property type="entry name" value="Pkinase"/>
    <property type="match status" value="1"/>
</dbReference>
<dbReference type="SMART" id="SM00220">
    <property type="entry name" value="S_TKc"/>
    <property type="match status" value="1"/>
</dbReference>
<dbReference type="SUPFAM" id="SSF56112">
    <property type="entry name" value="Protein kinase-like (PK-like)"/>
    <property type="match status" value="1"/>
</dbReference>
<dbReference type="PROSITE" id="PS00107">
    <property type="entry name" value="PROTEIN_KINASE_ATP"/>
    <property type="match status" value="1"/>
</dbReference>
<dbReference type="PROSITE" id="PS50011">
    <property type="entry name" value="PROTEIN_KINASE_DOM"/>
    <property type="match status" value="1"/>
</dbReference>
<dbReference type="PROSITE" id="PS00108">
    <property type="entry name" value="PROTEIN_KINASE_ST"/>
    <property type="match status" value="1"/>
</dbReference>
<gene>
    <name type="primary">ptkA</name>
    <name type="synonym">bur1</name>
    <name type="ORF">AN8865</name>
</gene>
<organism>
    <name type="scientific">Emericella nidulans (strain FGSC A4 / ATCC 38163 / CBS 112.46 / NRRL 194 / M139)</name>
    <name type="common">Aspergillus nidulans</name>
    <dbReference type="NCBI Taxonomy" id="227321"/>
    <lineage>
        <taxon>Eukaryota</taxon>
        <taxon>Fungi</taxon>
        <taxon>Dikarya</taxon>
        <taxon>Ascomycota</taxon>
        <taxon>Pezizomycotina</taxon>
        <taxon>Eurotiomycetes</taxon>
        <taxon>Eurotiomycetidae</taxon>
        <taxon>Eurotiales</taxon>
        <taxon>Aspergillaceae</taxon>
        <taxon>Aspergillus</taxon>
        <taxon>Aspergillus subgen. Nidulantes</taxon>
    </lineage>
</organism>
<name>BUR1_EMENI</name>
<accession>Q96VK3</accession>
<accession>C8V9B2</accession>
<accession>Q5AS65</accession>
<proteinExistence type="evidence at transcript level"/>
<protein>
    <recommendedName>
        <fullName>Serine/threonine-protein kinase bur1</fullName>
        <ecNumber>2.7.11.22</ecNumber>
        <ecNumber>2.7.11.23</ecNumber>
    </recommendedName>
    <alternativeName>
        <fullName>PITALRE-like kinase A</fullName>
    </alternativeName>
</protein>
<reference key="1">
    <citation type="submission" date="2001-06" db="EMBL/GenBank/DDBJ databases">
        <title>ptkA, a putative PITALRE like kinase of Aspergillus nidulans.</title>
        <authorList>
            <person name="Schier N."/>
            <person name="Fischer R."/>
        </authorList>
    </citation>
    <scope>NUCLEOTIDE SEQUENCE [MRNA]</scope>
    <source>
        <strain>SRF200</strain>
    </source>
</reference>
<reference key="2">
    <citation type="journal article" date="2005" name="Nature">
        <title>Sequencing of Aspergillus nidulans and comparative analysis with A. fumigatus and A. oryzae.</title>
        <authorList>
            <person name="Galagan J.E."/>
            <person name="Calvo S.E."/>
            <person name="Cuomo C."/>
            <person name="Ma L.-J."/>
            <person name="Wortman J.R."/>
            <person name="Batzoglou S."/>
            <person name="Lee S.-I."/>
            <person name="Bastuerkmen M."/>
            <person name="Spevak C.C."/>
            <person name="Clutterbuck J."/>
            <person name="Kapitonov V."/>
            <person name="Jurka J."/>
            <person name="Scazzocchio C."/>
            <person name="Farman M.L."/>
            <person name="Butler J."/>
            <person name="Purcell S."/>
            <person name="Harris S."/>
            <person name="Braus G.H."/>
            <person name="Draht O."/>
            <person name="Busch S."/>
            <person name="D'Enfert C."/>
            <person name="Bouchier C."/>
            <person name="Goldman G.H."/>
            <person name="Bell-Pedersen D."/>
            <person name="Griffiths-Jones S."/>
            <person name="Doonan J.H."/>
            <person name="Yu J."/>
            <person name="Vienken K."/>
            <person name="Pain A."/>
            <person name="Freitag M."/>
            <person name="Selker E.U."/>
            <person name="Archer D.B."/>
            <person name="Penalva M.A."/>
            <person name="Oakley B.R."/>
            <person name="Momany M."/>
            <person name="Tanaka T."/>
            <person name="Kumagai T."/>
            <person name="Asai K."/>
            <person name="Machida M."/>
            <person name="Nierman W.C."/>
            <person name="Denning D.W."/>
            <person name="Caddick M.X."/>
            <person name="Hynes M."/>
            <person name="Paoletti M."/>
            <person name="Fischer R."/>
            <person name="Miller B.L."/>
            <person name="Dyer P.S."/>
            <person name="Sachs M.S."/>
            <person name="Osmani S.A."/>
            <person name="Birren B.W."/>
        </authorList>
    </citation>
    <scope>NUCLEOTIDE SEQUENCE [LARGE SCALE GENOMIC DNA]</scope>
    <source>
        <strain>FGSC A4 / ATCC 38163 / CBS 112.46 / NRRL 194 / M139</strain>
    </source>
</reference>
<reference key="3">
    <citation type="journal article" date="2009" name="Fungal Genet. Biol.">
        <title>The 2008 update of the Aspergillus nidulans genome annotation: a community effort.</title>
        <authorList>
            <person name="Wortman J.R."/>
            <person name="Gilsenan J.M."/>
            <person name="Joardar V."/>
            <person name="Deegan J."/>
            <person name="Clutterbuck J."/>
            <person name="Andersen M.R."/>
            <person name="Archer D."/>
            <person name="Bencina M."/>
            <person name="Braus G."/>
            <person name="Coutinho P."/>
            <person name="von Dohren H."/>
            <person name="Doonan J."/>
            <person name="Driessen A.J."/>
            <person name="Durek P."/>
            <person name="Espeso E."/>
            <person name="Fekete E."/>
            <person name="Flipphi M."/>
            <person name="Estrada C.G."/>
            <person name="Geysens S."/>
            <person name="Goldman G."/>
            <person name="de Groot P.W."/>
            <person name="Hansen K."/>
            <person name="Harris S.D."/>
            <person name="Heinekamp T."/>
            <person name="Helmstaedt K."/>
            <person name="Henrissat B."/>
            <person name="Hofmann G."/>
            <person name="Homan T."/>
            <person name="Horio T."/>
            <person name="Horiuchi H."/>
            <person name="James S."/>
            <person name="Jones M."/>
            <person name="Karaffa L."/>
            <person name="Karanyi Z."/>
            <person name="Kato M."/>
            <person name="Keller N."/>
            <person name="Kelly D.E."/>
            <person name="Kiel J.A."/>
            <person name="Kim J.M."/>
            <person name="van der Klei I.J."/>
            <person name="Klis F.M."/>
            <person name="Kovalchuk A."/>
            <person name="Krasevec N."/>
            <person name="Kubicek C.P."/>
            <person name="Liu B."/>
            <person name="Maccabe A."/>
            <person name="Meyer V."/>
            <person name="Mirabito P."/>
            <person name="Miskei M."/>
            <person name="Mos M."/>
            <person name="Mullins J."/>
            <person name="Nelson D.R."/>
            <person name="Nielsen J."/>
            <person name="Oakley B.R."/>
            <person name="Osmani S.A."/>
            <person name="Pakula T."/>
            <person name="Paszewski A."/>
            <person name="Paulsen I."/>
            <person name="Pilsyk S."/>
            <person name="Pocsi I."/>
            <person name="Punt P.J."/>
            <person name="Ram A.F."/>
            <person name="Ren Q."/>
            <person name="Robellet X."/>
            <person name="Robson G."/>
            <person name="Seiboth B."/>
            <person name="van Solingen P."/>
            <person name="Specht T."/>
            <person name="Sun J."/>
            <person name="Taheri-Talesh N."/>
            <person name="Takeshita N."/>
            <person name="Ussery D."/>
            <person name="vanKuyk P.A."/>
            <person name="Visser H."/>
            <person name="van de Vondervoort P.J."/>
            <person name="de Vries R.P."/>
            <person name="Walton J."/>
            <person name="Xiang X."/>
            <person name="Xiong Y."/>
            <person name="Zeng A.P."/>
            <person name="Brandt B.W."/>
            <person name="Cornell M.J."/>
            <person name="van den Hondel C.A."/>
            <person name="Visser J."/>
            <person name="Oliver S.G."/>
            <person name="Turner G."/>
        </authorList>
    </citation>
    <scope>GENOME REANNOTATION</scope>
    <source>
        <strain>FGSC A4 / ATCC 38163 / CBS 112.46 / NRRL 194 / M139</strain>
    </source>
</reference>
<comment type="function">
    <text evidence="1">Serine/threonine-protein kinase involved in transcription regulation. Phosphorylates the UBC2/RAD6 ubiquitin-conjugating enzyme (E2), leading to monoubiquitination of histone H2B and the silencing of telomeric-associated genes. Also required for histone H3 methylation. Necessary for the recovery from pheromone-induced growth arrest in the cell cycle G1 phase (By similarity).</text>
</comment>
<comment type="catalytic activity">
    <reaction>
        <text>L-seryl-[protein] + ATP = O-phospho-L-seryl-[protein] + ADP + H(+)</text>
        <dbReference type="Rhea" id="RHEA:17989"/>
        <dbReference type="Rhea" id="RHEA-COMP:9863"/>
        <dbReference type="Rhea" id="RHEA-COMP:11604"/>
        <dbReference type="ChEBI" id="CHEBI:15378"/>
        <dbReference type="ChEBI" id="CHEBI:29999"/>
        <dbReference type="ChEBI" id="CHEBI:30616"/>
        <dbReference type="ChEBI" id="CHEBI:83421"/>
        <dbReference type="ChEBI" id="CHEBI:456216"/>
        <dbReference type="EC" id="2.7.11.22"/>
    </reaction>
</comment>
<comment type="catalytic activity">
    <reaction>
        <text>L-threonyl-[protein] + ATP = O-phospho-L-threonyl-[protein] + ADP + H(+)</text>
        <dbReference type="Rhea" id="RHEA:46608"/>
        <dbReference type="Rhea" id="RHEA-COMP:11060"/>
        <dbReference type="Rhea" id="RHEA-COMP:11605"/>
        <dbReference type="ChEBI" id="CHEBI:15378"/>
        <dbReference type="ChEBI" id="CHEBI:30013"/>
        <dbReference type="ChEBI" id="CHEBI:30616"/>
        <dbReference type="ChEBI" id="CHEBI:61977"/>
        <dbReference type="ChEBI" id="CHEBI:456216"/>
        <dbReference type="EC" id="2.7.11.22"/>
    </reaction>
</comment>
<comment type="catalytic activity">
    <reaction>
        <text>[DNA-directed RNA polymerase] + ATP = phospho-[DNA-directed RNA polymerase] + ADP + H(+)</text>
        <dbReference type="Rhea" id="RHEA:10216"/>
        <dbReference type="Rhea" id="RHEA-COMP:11321"/>
        <dbReference type="Rhea" id="RHEA-COMP:11322"/>
        <dbReference type="ChEBI" id="CHEBI:15378"/>
        <dbReference type="ChEBI" id="CHEBI:30616"/>
        <dbReference type="ChEBI" id="CHEBI:43176"/>
        <dbReference type="ChEBI" id="CHEBI:68546"/>
        <dbReference type="ChEBI" id="CHEBI:456216"/>
        <dbReference type="EC" id="2.7.11.23"/>
    </reaction>
</comment>
<comment type="subcellular location">
    <subcellularLocation>
        <location evidence="1">Nucleus</location>
    </subcellularLocation>
</comment>
<comment type="similarity">
    <text evidence="5">Belongs to the protein kinase superfamily. CMGC Ser/Thr protein kinase family. CDC2/CDKX subfamily.</text>
</comment>
<comment type="sequence caution" evidence="5">
    <conflict type="erroneous gene model prediction">
        <sequence resource="EMBL-CDS" id="EAA60153"/>
    </conflict>
</comment>
<keyword id="KW-0067">ATP-binding</keyword>
<keyword id="KW-0418">Kinase</keyword>
<keyword id="KW-0547">Nucleotide-binding</keyword>
<keyword id="KW-0539">Nucleus</keyword>
<keyword id="KW-1185">Reference proteome</keyword>
<keyword id="KW-0723">Serine/threonine-protein kinase</keyword>
<keyword id="KW-0808">Transferase</keyword>
<feature type="chain" id="PRO_0000085682" description="Serine/threonine-protein kinase bur1">
    <location>
        <begin position="1"/>
        <end position="544"/>
    </location>
</feature>
<feature type="domain" description="Protein kinase" evidence="2">
    <location>
        <begin position="25"/>
        <end position="326"/>
    </location>
</feature>
<feature type="region of interest" description="Disordered" evidence="4">
    <location>
        <begin position="357"/>
        <end position="544"/>
    </location>
</feature>
<feature type="compositionally biased region" description="Polar residues" evidence="4">
    <location>
        <begin position="374"/>
        <end position="403"/>
    </location>
</feature>
<feature type="compositionally biased region" description="Basic and acidic residues" evidence="4">
    <location>
        <begin position="419"/>
        <end position="438"/>
    </location>
</feature>
<feature type="compositionally biased region" description="Basic and acidic residues" evidence="4">
    <location>
        <begin position="456"/>
        <end position="466"/>
    </location>
</feature>
<feature type="compositionally biased region" description="Basic and acidic residues" evidence="4">
    <location>
        <begin position="488"/>
        <end position="511"/>
    </location>
</feature>
<feature type="compositionally biased region" description="Basic and acidic residues" evidence="4">
    <location>
        <begin position="532"/>
        <end position="544"/>
    </location>
</feature>
<feature type="active site" description="Proton acceptor" evidence="2 3">
    <location>
        <position position="155"/>
    </location>
</feature>
<feature type="binding site" evidence="2">
    <location>
        <begin position="31"/>
        <end position="39"/>
    </location>
    <ligand>
        <name>ATP</name>
        <dbReference type="ChEBI" id="CHEBI:30616"/>
    </ligand>
</feature>
<feature type="binding site" evidence="2">
    <location>
        <position position="54"/>
    </location>
    <ligand>
        <name>ATP</name>
        <dbReference type="ChEBI" id="CHEBI:30616"/>
    </ligand>
</feature>
<evidence type="ECO:0000250" key="1"/>
<evidence type="ECO:0000255" key="2">
    <source>
        <dbReference type="PROSITE-ProRule" id="PRU00159"/>
    </source>
</evidence>
<evidence type="ECO:0000255" key="3">
    <source>
        <dbReference type="PROSITE-ProRule" id="PRU10027"/>
    </source>
</evidence>
<evidence type="ECO:0000256" key="4">
    <source>
        <dbReference type="SAM" id="MobiDB-lite"/>
    </source>
</evidence>
<evidence type="ECO:0000305" key="5"/>